<comment type="function">
    <text evidence="2">Component of the large ribosomal subunit. The ribosome is a large ribonucleoprotein complex responsible for the synthesis of proteins in the cell.</text>
</comment>
<comment type="subunit">
    <text evidence="2">Component of the large ribosomal subunit. Interacts with DHX33.</text>
</comment>
<comment type="subcellular location">
    <subcellularLocation>
        <location evidence="2">Nucleus</location>
        <location evidence="2">Nucleolus</location>
    </subcellularLocation>
    <subcellularLocation>
        <location evidence="2">Cytoplasm</location>
    </subcellularLocation>
</comment>
<comment type="PTM">
    <text evidence="2">Constitutively monomethylated at His-245 by METTL18. Methylation at His-245 regulates translation elongation by slowing ribosome traversal on tyrosine codons: slower elongation provides enough time for proper folding of synthesized proteins and prevents cellular aggregation of tyrosine-rich proteins It is not required for incorporation of RPL3 into ribosomes.</text>
</comment>
<comment type="similarity">
    <text evidence="4">Belongs to the universal ribosomal protein uL3 family.</text>
</comment>
<reference key="1">
    <citation type="journal article" date="1994" name="Biochim. Biophys. Acta">
        <title>cDNA sequence for bovine ribosomal protein L3 carrying a bipartite nuclear targeting motif, identified also in many other ribosomal proteins.</title>
        <authorList>
            <person name="Simonic T."/>
            <person name="Gaudi S."/>
            <person name="Giussani F."/>
            <person name="Ronchi S."/>
            <person name="Tenchini M.L."/>
        </authorList>
    </citation>
    <scope>NUCLEOTIDE SEQUENCE [MRNA]</scope>
</reference>
<reference key="2">
    <citation type="journal article" date="2000" name="Biochim. Biophys. Acta">
        <title>The intron-containing L3 ribosomal protein gene (RPL3): sequence analysis and identification of U43 and of two novel intronic small nucleolar RNAs.</title>
        <authorList>
            <person name="Duga S."/>
            <person name="Asselta R."/>
            <person name="Malcovati M."/>
            <person name="Tenchini M.L."/>
            <person name="Ronchi S."/>
            <person name="Simonic T."/>
        </authorList>
    </citation>
    <scope>NUCLEOTIDE SEQUENCE [GENOMIC DNA]</scope>
</reference>
<reference key="3">
    <citation type="journal article" date="2005" name="BMC Genomics">
        <title>Characterization of 954 bovine full-CDS cDNA sequences.</title>
        <authorList>
            <person name="Harhay G.P."/>
            <person name="Sonstegard T.S."/>
            <person name="Keele J.W."/>
            <person name="Heaton M.P."/>
            <person name="Clawson M.L."/>
            <person name="Snelling W.M."/>
            <person name="Wiedmann R.T."/>
            <person name="Van Tassell C.P."/>
            <person name="Smith T.P.L."/>
        </authorList>
    </citation>
    <scope>NUCLEOTIDE SEQUENCE [LARGE SCALE MRNA]</scope>
</reference>
<reference key="4">
    <citation type="submission" date="2005-08" db="EMBL/GenBank/DDBJ databases">
        <authorList>
            <consortium name="NIH - Mammalian Gene Collection (MGC) project"/>
        </authorList>
    </citation>
    <scope>NUCLEOTIDE SEQUENCE [LARGE SCALE MRNA]</scope>
    <source>
        <strain>Crossbred X Angus</strain>
        <tissue>Ileum</tissue>
    </source>
</reference>
<protein>
    <recommendedName>
        <fullName evidence="4">Large ribosomal subunit protein uL3</fullName>
    </recommendedName>
    <alternativeName>
        <fullName>60S ribosomal protein L3</fullName>
    </alternativeName>
</protein>
<evidence type="ECO:0000250" key="1">
    <source>
        <dbReference type="UniProtKB" id="P27659"/>
    </source>
</evidence>
<evidence type="ECO:0000250" key="2">
    <source>
        <dbReference type="UniProtKB" id="P39023"/>
    </source>
</evidence>
<evidence type="ECO:0000256" key="3">
    <source>
        <dbReference type="SAM" id="MobiDB-lite"/>
    </source>
</evidence>
<evidence type="ECO:0000305" key="4"/>
<feature type="chain" id="PRO_0000077226" description="Large ribosomal subunit protein uL3">
    <location>
        <begin position="1"/>
        <end position="403"/>
    </location>
</feature>
<feature type="region of interest" description="Disordered" evidence="3">
    <location>
        <begin position="1"/>
        <end position="38"/>
    </location>
</feature>
<feature type="compositionally biased region" description="Basic residues" evidence="3">
    <location>
        <begin position="18"/>
        <end position="31"/>
    </location>
</feature>
<feature type="modified residue" description="Phosphoserine" evidence="2">
    <location>
        <position position="13"/>
    </location>
</feature>
<feature type="modified residue" description="N6-acetyllysine" evidence="1">
    <location>
        <position position="136"/>
    </location>
</feature>
<feature type="modified residue" description="Tele-methylhistidine" evidence="2">
    <location>
        <position position="245"/>
    </location>
</feature>
<feature type="modified residue" description="N6-acetyllysine; alternate" evidence="1">
    <location>
        <position position="286"/>
    </location>
</feature>
<feature type="modified residue" description="N6-acetyllysine; alternate" evidence="2">
    <location>
        <position position="294"/>
    </location>
</feature>
<feature type="modified residue" description="Phosphoserine" evidence="2">
    <location>
        <position position="304"/>
    </location>
</feature>
<feature type="modified residue" description="N6-acetyllysine; alternate" evidence="2">
    <location>
        <position position="366"/>
    </location>
</feature>
<feature type="modified residue" description="N6-acetyllysine" evidence="1">
    <location>
        <position position="373"/>
    </location>
</feature>
<feature type="cross-link" description="Glycyl lysine isopeptide (Lys-Gly) (interchain with G-Cter in SUMO2)" evidence="2">
    <location>
        <position position="39"/>
    </location>
</feature>
<feature type="cross-link" description="Glycyl lysine isopeptide (Lys-Gly) (interchain with G-Cter in SUMO2)" evidence="2">
    <location>
        <position position="224"/>
    </location>
</feature>
<feature type="cross-link" description="Glycyl lysine isopeptide (Lys-Gly) (interchain with G-Cter in SUMO2)" evidence="2">
    <location>
        <position position="226"/>
    </location>
</feature>
<feature type="cross-link" description="Glycyl lysine isopeptide (Lys-Gly) (interchain with G-Cter in SUMO2); alternate" evidence="2">
    <location>
        <position position="286"/>
    </location>
</feature>
<feature type="cross-link" description="Glycyl lysine isopeptide (Lys-Gly) (interchain with G-Cter in SUMO1); alternate" evidence="2">
    <location>
        <position position="294"/>
    </location>
</feature>
<feature type="cross-link" description="Glycyl lysine isopeptide (Lys-Gly) (interchain with G-Cter in SUMO2); alternate" evidence="2">
    <location>
        <position position="366"/>
    </location>
</feature>
<feature type="cross-link" description="Glycyl lysine isopeptide (Lys-Gly) (interchain with G-Cter in SUMO2)" evidence="2">
    <location>
        <position position="386"/>
    </location>
</feature>
<feature type="cross-link" description="Glycyl lysine isopeptide (Lys-Gly) (interchain with G-Cter in SUMO2)" evidence="2">
    <location>
        <position position="393"/>
    </location>
</feature>
<feature type="cross-link" description="Glycyl lysine isopeptide (Lys-Gly) (interchain with G-Cter in SUMO2)" evidence="2">
    <location>
        <position position="399"/>
    </location>
</feature>
<feature type="sequence conflict" description="In Ref. 2; CAB76199." evidence="4" ref="2">
    <original>K</original>
    <variation>E</variation>
    <location>
        <position position="362"/>
    </location>
</feature>
<feature type="sequence conflict" description="In Ref. 2; CAB76199." evidence="4" ref="2">
    <original>I</original>
    <variation>V</variation>
    <location>
        <position position="397"/>
    </location>
</feature>
<dbReference type="EMBL" id="Z29555">
    <property type="protein sequence ID" value="CAA82654.1"/>
    <property type="molecule type" value="mRNA"/>
</dbReference>
<dbReference type="EMBL" id="AJ238851">
    <property type="protein sequence ID" value="CAB76199.1"/>
    <property type="molecule type" value="Genomic_DNA"/>
</dbReference>
<dbReference type="EMBL" id="BT021012">
    <property type="protein sequence ID" value="AAX09029.1"/>
    <property type="molecule type" value="mRNA"/>
</dbReference>
<dbReference type="EMBL" id="BC102253">
    <property type="protein sequence ID" value="AAI02254.1"/>
    <property type="molecule type" value="mRNA"/>
</dbReference>
<dbReference type="PIR" id="S50221">
    <property type="entry name" value="S50221"/>
</dbReference>
<dbReference type="RefSeq" id="NP_777140.1">
    <property type="nucleotide sequence ID" value="NM_174715.1"/>
</dbReference>
<dbReference type="SMR" id="P39872"/>
<dbReference type="FunCoup" id="P39872">
    <property type="interactions" value="2548"/>
</dbReference>
<dbReference type="IntAct" id="P39872">
    <property type="interactions" value="1"/>
</dbReference>
<dbReference type="STRING" id="9913.ENSBTAP00000059759"/>
<dbReference type="PaxDb" id="9913-ENSBTAP00000004188"/>
<dbReference type="PeptideAtlas" id="P39872"/>
<dbReference type="GeneID" id="282688"/>
<dbReference type="KEGG" id="bta:282688"/>
<dbReference type="CTD" id="6122"/>
<dbReference type="VEuPathDB" id="HostDB:ENSBTAG00000003228"/>
<dbReference type="eggNOG" id="KOG0746">
    <property type="taxonomic scope" value="Eukaryota"/>
</dbReference>
<dbReference type="HOGENOM" id="CLU_033361_2_1_1"/>
<dbReference type="InParanoid" id="P39872"/>
<dbReference type="OMA" id="QRTEYNK"/>
<dbReference type="OrthoDB" id="1611972at2759"/>
<dbReference type="TreeFam" id="TF300555"/>
<dbReference type="Reactome" id="R-BTA-156827">
    <property type="pathway name" value="L13a-mediated translational silencing of Ceruloplasmin expression"/>
</dbReference>
<dbReference type="Reactome" id="R-BTA-1799339">
    <property type="pathway name" value="SRP-dependent cotranslational protein targeting to membrane"/>
</dbReference>
<dbReference type="Reactome" id="R-BTA-6791226">
    <property type="pathway name" value="Major pathway of rRNA processing in the nucleolus and cytosol"/>
</dbReference>
<dbReference type="Reactome" id="R-BTA-72689">
    <property type="pathway name" value="Formation of a pool of free 40S subunits"/>
</dbReference>
<dbReference type="Reactome" id="R-BTA-72706">
    <property type="pathway name" value="GTP hydrolysis and joining of the 60S ribosomal subunit"/>
</dbReference>
<dbReference type="Reactome" id="R-BTA-975956">
    <property type="pathway name" value="Nonsense Mediated Decay (NMD) independent of the Exon Junction Complex (EJC)"/>
</dbReference>
<dbReference type="Reactome" id="R-BTA-975957">
    <property type="pathway name" value="Nonsense Mediated Decay (NMD) enhanced by the Exon Junction Complex (EJC)"/>
</dbReference>
<dbReference type="CD-CODE" id="D7FE2080">
    <property type="entry name" value="Nucleolus"/>
</dbReference>
<dbReference type="Proteomes" id="UP000009136">
    <property type="component" value="Chromosome 5"/>
</dbReference>
<dbReference type="Bgee" id="ENSBTAG00000003228">
    <property type="expression patterns" value="Expressed in digestive system secreted substance and 106 other cell types or tissues"/>
</dbReference>
<dbReference type="GO" id="GO:0022625">
    <property type="term" value="C:cytosolic large ribosomal subunit"/>
    <property type="evidence" value="ECO:0000318"/>
    <property type="project" value="GO_Central"/>
</dbReference>
<dbReference type="GO" id="GO:0005730">
    <property type="term" value="C:nucleolus"/>
    <property type="evidence" value="ECO:0000250"/>
    <property type="project" value="UniProtKB"/>
</dbReference>
<dbReference type="GO" id="GO:0003723">
    <property type="term" value="F:RNA binding"/>
    <property type="evidence" value="ECO:0000318"/>
    <property type="project" value="GO_Central"/>
</dbReference>
<dbReference type="GO" id="GO:0003735">
    <property type="term" value="F:structural constituent of ribosome"/>
    <property type="evidence" value="ECO:0000318"/>
    <property type="project" value="GO_Central"/>
</dbReference>
<dbReference type="GO" id="GO:0006412">
    <property type="term" value="P:translation"/>
    <property type="evidence" value="ECO:0000318"/>
    <property type="project" value="GO_Central"/>
</dbReference>
<dbReference type="FunFam" id="2.40.30.10:FF:000079">
    <property type="entry name" value="60S ribosomal protein L3"/>
    <property type="match status" value="1"/>
</dbReference>
<dbReference type="FunFam" id="3.30.1430.10:FF:000001">
    <property type="entry name" value="60S ribosomal protein L3"/>
    <property type="match status" value="1"/>
</dbReference>
<dbReference type="FunFam" id="4.10.960.10:FF:000002">
    <property type="entry name" value="60S ribosomal protein L3"/>
    <property type="match status" value="1"/>
</dbReference>
<dbReference type="FunFam" id="4.10.960.10:FF:000004">
    <property type="entry name" value="60S ribosomal protein L3"/>
    <property type="match status" value="1"/>
</dbReference>
<dbReference type="FunFam" id="2.40.30.10:FF:000351">
    <property type="entry name" value="Ribosomal protein L3"/>
    <property type="match status" value="1"/>
</dbReference>
<dbReference type="Gene3D" id="3.30.1430.10">
    <property type="match status" value="1"/>
</dbReference>
<dbReference type="Gene3D" id="4.10.960.10">
    <property type="entry name" value="Ribosomal protein L3, domain 3"/>
    <property type="match status" value="1"/>
</dbReference>
<dbReference type="Gene3D" id="2.40.30.10">
    <property type="entry name" value="Translation factors"/>
    <property type="match status" value="1"/>
</dbReference>
<dbReference type="InterPro" id="IPR045077">
    <property type="entry name" value="L3_arc_euk"/>
</dbReference>
<dbReference type="InterPro" id="IPR044892">
    <property type="entry name" value="Ribosomal_L3_dom_3_arc_sf"/>
</dbReference>
<dbReference type="InterPro" id="IPR000597">
    <property type="entry name" value="Ribosomal_uL3"/>
</dbReference>
<dbReference type="InterPro" id="IPR019926">
    <property type="entry name" value="Ribosomal_uL3_CS"/>
</dbReference>
<dbReference type="InterPro" id="IPR009000">
    <property type="entry name" value="Transl_B-barrel_sf"/>
</dbReference>
<dbReference type="PANTHER" id="PTHR11363">
    <property type="entry name" value="60S RIBOSOMAL PROTEIN L3-RELATED"/>
    <property type="match status" value="1"/>
</dbReference>
<dbReference type="PANTHER" id="PTHR11363:SF4">
    <property type="entry name" value="LARGE RIBOSOMAL SUBUNIT PROTEIN UL3"/>
    <property type="match status" value="1"/>
</dbReference>
<dbReference type="Pfam" id="PF00297">
    <property type="entry name" value="Ribosomal_L3"/>
    <property type="match status" value="1"/>
</dbReference>
<dbReference type="SUPFAM" id="SSF50447">
    <property type="entry name" value="Translation proteins"/>
    <property type="match status" value="1"/>
</dbReference>
<dbReference type="PROSITE" id="PS00474">
    <property type="entry name" value="RIBOSOMAL_L3"/>
    <property type="match status" value="1"/>
</dbReference>
<name>RL3_BOVIN</name>
<proteinExistence type="evidence at transcript level"/>
<organism>
    <name type="scientific">Bos taurus</name>
    <name type="common">Bovine</name>
    <dbReference type="NCBI Taxonomy" id="9913"/>
    <lineage>
        <taxon>Eukaryota</taxon>
        <taxon>Metazoa</taxon>
        <taxon>Chordata</taxon>
        <taxon>Craniata</taxon>
        <taxon>Vertebrata</taxon>
        <taxon>Euteleostomi</taxon>
        <taxon>Mammalia</taxon>
        <taxon>Eutheria</taxon>
        <taxon>Laurasiatheria</taxon>
        <taxon>Artiodactyla</taxon>
        <taxon>Ruminantia</taxon>
        <taxon>Pecora</taxon>
        <taxon>Bovidae</taxon>
        <taxon>Bovinae</taxon>
        <taxon>Bos</taxon>
    </lineage>
</organism>
<sequence>MSHRKFSAPRHGSLGFLPRKRSSRHRGKVKSFPKDDSSKPVHLTAFLGYKAGMTHIVREVDRPGSKVNKKEVVEAVTIVETPPMVIVGIVGYVETPRGLRTFKTIFAEHISDECKRRFYKNWHKSKKKAFTKYCKKWQDADGKKQLERDFSSMKKYCQVIRVIAHTQMRLLPLRQKKAHLMEVQVNGGTVAEKLDWARERLEQQVPVSQVFGQDEMIDVIGVTKGKGYKGVTSRWHTKKLPRKTHRGLRKVACIGAWHPARVAFSVARAGQKGYHHRTEINKKIYKIGQGYLIKDGKLIKNNASTDYDLSDKSINPLGGFVHYGEVTNDFVMLKGCVVGTKKRVLTLRKSLLVQTKRRALEKIDLKFIDTTSKFGHGRFQTVEEKKAFMGPLKKDRIAKEEGA</sequence>
<accession>P39872</accession>
<accession>Q5E9A8</accession>
<accession>Q9N0L7</accession>
<gene>
    <name type="primary">RPL3</name>
</gene>
<keyword id="KW-0007">Acetylation</keyword>
<keyword id="KW-0963">Cytoplasm</keyword>
<keyword id="KW-1017">Isopeptide bond</keyword>
<keyword id="KW-0488">Methylation</keyword>
<keyword id="KW-0539">Nucleus</keyword>
<keyword id="KW-0597">Phosphoprotein</keyword>
<keyword id="KW-1185">Reference proteome</keyword>
<keyword id="KW-0687">Ribonucleoprotein</keyword>
<keyword id="KW-0689">Ribosomal protein</keyword>
<keyword id="KW-0832">Ubl conjugation</keyword>